<dbReference type="EMBL" id="AE000516">
    <property type="protein sequence ID" value="AAK45572.1"/>
    <property type="status" value="ALT_INIT"/>
    <property type="molecule type" value="Genomic_DNA"/>
</dbReference>
<dbReference type="PIR" id="B70755">
    <property type="entry name" value="B70755"/>
</dbReference>
<dbReference type="RefSeq" id="WP_003901123.1">
    <property type="nucleotide sequence ID" value="NZ_KK341227.1"/>
</dbReference>
<dbReference type="KEGG" id="mtc:MT1312"/>
<dbReference type="PATRIC" id="fig|83331.31.peg.1417"/>
<dbReference type="HOGENOM" id="CLU_129265_0_0_11"/>
<dbReference type="Proteomes" id="UP000001020">
    <property type="component" value="Chromosome"/>
</dbReference>
<dbReference type="GO" id="GO:0005886">
    <property type="term" value="C:plasma membrane"/>
    <property type="evidence" value="ECO:0007669"/>
    <property type="project" value="UniProtKB-SubCell"/>
</dbReference>
<dbReference type="InterPro" id="IPR024520">
    <property type="entry name" value="DUF3558"/>
</dbReference>
<dbReference type="Pfam" id="PF12079">
    <property type="entry name" value="DUF3558"/>
    <property type="match status" value="1"/>
</dbReference>
<dbReference type="PROSITE" id="PS51257">
    <property type="entry name" value="PROKAR_LIPOPROTEIN"/>
    <property type="match status" value="1"/>
</dbReference>
<keyword id="KW-1003">Cell membrane</keyword>
<keyword id="KW-0449">Lipoprotein</keyword>
<keyword id="KW-0472">Membrane</keyword>
<keyword id="KW-0564">Palmitate</keyword>
<keyword id="KW-1185">Reference proteome</keyword>
<keyword id="KW-0732">Signal</keyword>
<name>LPRB_MYCTO</name>
<organism>
    <name type="scientific">Mycobacterium tuberculosis (strain CDC 1551 / Oshkosh)</name>
    <dbReference type="NCBI Taxonomy" id="83331"/>
    <lineage>
        <taxon>Bacteria</taxon>
        <taxon>Bacillati</taxon>
        <taxon>Actinomycetota</taxon>
        <taxon>Actinomycetes</taxon>
        <taxon>Mycobacteriales</taxon>
        <taxon>Mycobacteriaceae</taxon>
        <taxon>Mycobacterium</taxon>
        <taxon>Mycobacterium tuberculosis complex</taxon>
    </lineage>
</organism>
<reference key="1">
    <citation type="journal article" date="2002" name="J. Bacteriol.">
        <title>Whole-genome comparison of Mycobacterium tuberculosis clinical and laboratory strains.</title>
        <authorList>
            <person name="Fleischmann R.D."/>
            <person name="Alland D."/>
            <person name="Eisen J.A."/>
            <person name="Carpenter L."/>
            <person name="White O."/>
            <person name="Peterson J.D."/>
            <person name="DeBoy R.T."/>
            <person name="Dodson R.J."/>
            <person name="Gwinn M.L."/>
            <person name="Haft D.H."/>
            <person name="Hickey E.K."/>
            <person name="Kolonay J.F."/>
            <person name="Nelson W.C."/>
            <person name="Umayam L.A."/>
            <person name="Ermolaeva M.D."/>
            <person name="Salzberg S.L."/>
            <person name="Delcher A."/>
            <person name="Utterback T.R."/>
            <person name="Weidman J.F."/>
            <person name="Khouri H.M."/>
            <person name="Gill J."/>
            <person name="Mikula A."/>
            <person name="Bishai W."/>
            <person name="Jacobs W.R. Jr."/>
            <person name="Venter J.C."/>
            <person name="Fraser C.M."/>
        </authorList>
    </citation>
    <scope>NUCLEOTIDE SEQUENCE [LARGE SCALE GENOMIC DNA]</scope>
    <source>
        <strain>CDC 1551 / Oshkosh</strain>
    </source>
</reference>
<proteinExistence type="inferred from homology"/>
<gene>
    <name type="primary">lprB</name>
    <name type="ordered locus">MT1312</name>
</gene>
<sequence length="185" mass="19739">MRRKVRRLTLAVSALVALFPAVAGCSDSGDNKPGATIPSTPANAEGRHGPFFPQCGGVSDQTVTELTRVTGLVNTAKNSVGCQWLAGGGILGPHFSFSWYRGSPIGRERKTEELSRASVEDINIDGHSGFIAIGNEPSLGDSLCEVGIQFSDDFIEWSVSFSQKPFPLPCDIAKELTRQSIANSK</sequence>
<accession>P9WK52</accession>
<accession>L0T7T1</accession>
<accession>Q11045</accession>
<feature type="signal peptide" evidence="1">
    <location>
        <begin position="1"/>
        <end position="24"/>
    </location>
</feature>
<feature type="chain" id="PRO_0000427714" description="Putative lipoprotein LprB">
    <location>
        <begin position="25"/>
        <end position="185"/>
    </location>
</feature>
<feature type="region of interest" description="Disordered" evidence="2">
    <location>
        <begin position="26"/>
        <end position="50"/>
    </location>
</feature>
<feature type="lipid moiety-binding region" description="N-palmitoyl cysteine" evidence="1">
    <location>
        <position position="25"/>
    </location>
</feature>
<feature type="lipid moiety-binding region" description="S-diacylglycerol cysteine" evidence="1">
    <location>
        <position position="25"/>
    </location>
</feature>
<protein>
    <recommendedName>
        <fullName>Putative lipoprotein LprB</fullName>
    </recommendedName>
</protein>
<evidence type="ECO:0000255" key="1">
    <source>
        <dbReference type="PROSITE-ProRule" id="PRU00303"/>
    </source>
</evidence>
<evidence type="ECO:0000256" key="2">
    <source>
        <dbReference type="SAM" id="MobiDB-lite"/>
    </source>
</evidence>
<evidence type="ECO:0000305" key="3"/>
<comment type="subcellular location">
    <subcellularLocation>
        <location evidence="1">Cell membrane</location>
        <topology evidence="1">Lipid-anchor</topology>
    </subcellularLocation>
</comment>
<comment type="sequence caution" evidence="3">
    <conflict type="erroneous initiation">
        <sequence resource="EMBL-CDS" id="AAK45572"/>
    </conflict>
</comment>